<feature type="chain" id="PRO_0000165147" description="Uncharacterized 23.8 kDa protein in e-segB intergenic region">
    <location>
        <begin position="1"/>
        <end position="202"/>
    </location>
</feature>
<organismHost>
    <name type="scientific">Escherichia coli</name>
    <dbReference type="NCBI Taxonomy" id="562"/>
</organismHost>
<sequence length="202" mass="23814">MKMQSDFNSMFEEFQRHVDVPDQLLNALKHMAKGRNYYWGSSYETDESLSGRFSRGKKSLIRPGILINSIESIHSLTCDFDVEFTDFISPEWSVCYLNDDFDYLGVYSLSDAWFKRNLQKSNLFYIDTTVKFQGKKYFFTLIVDSETKHENKRILSKRNILNIVDDLFDKLVENPNFESDLLLEKFVKECREYVKAITIPSK</sequence>
<gene>
    <name type="primary">y06P</name>
    <name type="synonym">e.5</name>
    <name type="synonym">msp4</name>
</gene>
<comment type="sequence caution" evidence="1">
    <conflict type="erroneous initiation">
        <sequence resource="EMBL-CDS" id="AAB59289"/>
    </conflict>
</comment>
<evidence type="ECO:0000305" key="1"/>
<organism>
    <name type="scientific">Enterobacteria phage T4</name>
    <name type="common">Bacteriophage T4</name>
    <dbReference type="NCBI Taxonomy" id="10665"/>
    <lineage>
        <taxon>Viruses</taxon>
        <taxon>Duplodnaviria</taxon>
        <taxon>Heunggongvirae</taxon>
        <taxon>Uroviricota</taxon>
        <taxon>Caudoviricetes</taxon>
        <taxon>Straboviridae</taxon>
        <taxon>Tevenvirinae</taxon>
        <taxon>Tequatrovirus</taxon>
    </lineage>
</organism>
<keyword id="KW-1185">Reference proteome</keyword>
<proteinExistence type="predicted"/>
<reference key="1">
    <citation type="submission" date="1994-08" db="EMBL/GenBank/DDBJ databases">
        <title>Analysis of the region between lysozyme and the tRNA genes of bacteriophage T4.</title>
        <authorList>
            <person name="Anderson B."/>
            <person name="Zurabishvili T."/>
            <person name="Marusich E."/>
            <person name="Schneider M."/>
            <person name="Mullins T."/>
            <person name="Napuli A."/>
            <person name="Mesyanzhinov V.V."/>
            <person name="Neitzel J."/>
            <person name="Kutter E."/>
        </authorList>
    </citation>
    <scope>NUCLEOTIDE SEQUENCE [GENOMIC DNA]</scope>
    <source>
        <strain>D</strain>
    </source>
</reference>
<reference key="2">
    <citation type="journal article" date="2003" name="Microbiol. Mol. Biol. Rev.">
        <title>Bacteriophage T4 genome.</title>
        <authorList>
            <person name="Miller E.S."/>
            <person name="Kutter E."/>
            <person name="Mosig G."/>
            <person name="Arisaka F."/>
            <person name="Kunisawa T."/>
            <person name="Ruger W."/>
        </authorList>
    </citation>
    <scope>NUCLEOTIDE SEQUENCE [LARGE SCALE GENOMIC DNA]</scope>
</reference>
<dbReference type="EMBL" id="L13089">
    <property type="protein sequence ID" value="AAB59289.1"/>
    <property type="status" value="ALT_INIT"/>
    <property type="molecule type" value="Genomic_DNA"/>
</dbReference>
<dbReference type="EMBL" id="AF158101">
    <property type="protein sequence ID" value="AAD42573.1"/>
    <property type="molecule type" value="Genomic_DNA"/>
</dbReference>
<dbReference type="RefSeq" id="NP_049741.1">
    <property type="nucleotide sequence ID" value="NC_000866.4"/>
</dbReference>
<dbReference type="GeneID" id="1258745"/>
<dbReference type="KEGG" id="vg:1258745"/>
<dbReference type="OrthoDB" id="8590at10239"/>
<dbReference type="Proteomes" id="UP000009087">
    <property type="component" value="Segment"/>
</dbReference>
<name>Y06P_BPT4</name>
<protein>
    <recommendedName>
        <fullName>Uncharacterized 23.8 kDa protein in e-segB intergenic region</fullName>
    </recommendedName>
</protein>
<accession>P39223</accession>